<comment type="function">
    <text evidence="1">Bidirectionally degrades single-stranded DNA into large acid-insoluble oligonucleotides, which are then degraded further into small acid-soluble oligonucleotides.</text>
</comment>
<comment type="catalytic activity">
    <reaction evidence="1">
        <text>Exonucleolytic cleavage in either 5'- to 3'- or 3'- to 5'-direction to yield nucleoside 5'-phosphates.</text>
        <dbReference type="EC" id="3.1.11.6"/>
    </reaction>
</comment>
<comment type="subunit">
    <text evidence="1">Heterooligomer composed of large and small subunits.</text>
</comment>
<comment type="subcellular location">
    <subcellularLocation>
        <location evidence="1">Cytoplasm</location>
    </subcellularLocation>
</comment>
<comment type="similarity">
    <text evidence="1">Belongs to the XseB family.</text>
</comment>
<evidence type="ECO:0000255" key="1">
    <source>
        <dbReference type="HAMAP-Rule" id="MF_00337"/>
    </source>
</evidence>
<name>EX7S_SALCH</name>
<reference key="1">
    <citation type="journal article" date="2005" name="Nucleic Acids Res.">
        <title>The genome sequence of Salmonella enterica serovar Choleraesuis, a highly invasive and resistant zoonotic pathogen.</title>
        <authorList>
            <person name="Chiu C.-H."/>
            <person name="Tang P."/>
            <person name="Chu C."/>
            <person name="Hu S."/>
            <person name="Bao Q."/>
            <person name="Yu J."/>
            <person name="Chou Y.-Y."/>
            <person name="Wang H.-S."/>
            <person name="Lee Y.-S."/>
        </authorList>
    </citation>
    <scope>NUCLEOTIDE SEQUENCE [LARGE SCALE GENOMIC DNA]</scope>
    <source>
        <strain>SC-B67</strain>
    </source>
</reference>
<dbReference type="EC" id="3.1.11.6" evidence="1"/>
<dbReference type="EMBL" id="AE017220">
    <property type="protein sequence ID" value="AAX64371.1"/>
    <property type="molecule type" value="Genomic_DNA"/>
</dbReference>
<dbReference type="RefSeq" id="WP_001124944.1">
    <property type="nucleotide sequence ID" value="NC_006905.1"/>
</dbReference>
<dbReference type="SMR" id="Q57SE0"/>
<dbReference type="KEGG" id="sec:SCH_0465"/>
<dbReference type="HOGENOM" id="CLU_145918_3_3_6"/>
<dbReference type="Proteomes" id="UP000000538">
    <property type="component" value="Chromosome"/>
</dbReference>
<dbReference type="GO" id="GO:0005829">
    <property type="term" value="C:cytosol"/>
    <property type="evidence" value="ECO:0007669"/>
    <property type="project" value="TreeGrafter"/>
</dbReference>
<dbReference type="GO" id="GO:0009318">
    <property type="term" value="C:exodeoxyribonuclease VII complex"/>
    <property type="evidence" value="ECO:0007669"/>
    <property type="project" value="InterPro"/>
</dbReference>
<dbReference type="GO" id="GO:0008855">
    <property type="term" value="F:exodeoxyribonuclease VII activity"/>
    <property type="evidence" value="ECO:0007669"/>
    <property type="project" value="UniProtKB-UniRule"/>
</dbReference>
<dbReference type="GO" id="GO:0006308">
    <property type="term" value="P:DNA catabolic process"/>
    <property type="evidence" value="ECO:0007669"/>
    <property type="project" value="UniProtKB-UniRule"/>
</dbReference>
<dbReference type="FunFam" id="1.10.287.1040:FF:000001">
    <property type="entry name" value="Exodeoxyribonuclease 7 small subunit"/>
    <property type="match status" value="1"/>
</dbReference>
<dbReference type="Gene3D" id="1.10.287.1040">
    <property type="entry name" value="Exonuclease VII, small subunit"/>
    <property type="match status" value="1"/>
</dbReference>
<dbReference type="HAMAP" id="MF_00337">
    <property type="entry name" value="Exonuc_7_S"/>
    <property type="match status" value="1"/>
</dbReference>
<dbReference type="InterPro" id="IPR003761">
    <property type="entry name" value="Exonuc_VII_S"/>
</dbReference>
<dbReference type="InterPro" id="IPR037004">
    <property type="entry name" value="Exonuc_VII_ssu_sf"/>
</dbReference>
<dbReference type="NCBIfam" id="NF002137">
    <property type="entry name" value="PRK00977.1-1"/>
    <property type="match status" value="1"/>
</dbReference>
<dbReference type="NCBIfam" id="NF002140">
    <property type="entry name" value="PRK00977.1-4"/>
    <property type="match status" value="1"/>
</dbReference>
<dbReference type="NCBIfam" id="TIGR01280">
    <property type="entry name" value="xseB"/>
    <property type="match status" value="1"/>
</dbReference>
<dbReference type="PANTHER" id="PTHR34137">
    <property type="entry name" value="EXODEOXYRIBONUCLEASE 7 SMALL SUBUNIT"/>
    <property type="match status" value="1"/>
</dbReference>
<dbReference type="PANTHER" id="PTHR34137:SF1">
    <property type="entry name" value="EXODEOXYRIBONUCLEASE 7 SMALL SUBUNIT"/>
    <property type="match status" value="1"/>
</dbReference>
<dbReference type="Pfam" id="PF02609">
    <property type="entry name" value="Exonuc_VII_S"/>
    <property type="match status" value="1"/>
</dbReference>
<dbReference type="PIRSF" id="PIRSF006488">
    <property type="entry name" value="Exonuc_VII_S"/>
    <property type="match status" value="1"/>
</dbReference>
<dbReference type="SUPFAM" id="SSF116842">
    <property type="entry name" value="XseB-like"/>
    <property type="match status" value="1"/>
</dbReference>
<protein>
    <recommendedName>
        <fullName evidence="1">Exodeoxyribonuclease 7 small subunit</fullName>
        <ecNumber evidence="1">3.1.11.6</ecNumber>
    </recommendedName>
    <alternativeName>
        <fullName evidence="1">Exodeoxyribonuclease VII small subunit</fullName>
        <shortName evidence="1">Exonuclease VII small subunit</shortName>
    </alternativeName>
</protein>
<feature type="chain" id="PRO_0000303744" description="Exodeoxyribonuclease 7 small subunit">
    <location>
        <begin position="1"/>
        <end position="80"/>
    </location>
</feature>
<accession>Q57SE0</accession>
<gene>
    <name evidence="1" type="primary">xseB</name>
    <name type="ordered locus">SCH_0465</name>
</gene>
<organism>
    <name type="scientific">Salmonella choleraesuis (strain SC-B67)</name>
    <dbReference type="NCBI Taxonomy" id="321314"/>
    <lineage>
        <taxon>Bacteria</taxon>
        <taxon>Pseudomonadati</taxon>
        <taxon>Pseudomonadota</taxon>
        <taxon>Gammaproteobacteria</taxon>
        <taxon>Enterobacterales</taxon>
        <taxon>Enterobacteriaceae</taxon>
        <taxon>Salmonella</taxon>
    </lineage>
</organism>
<proteinExistence type="inferred from homology"/>
<sequence length="80" mass="8932">MPKKNEAPASFETALSELEHIVTRLESGDLPLEDALNEFERGVQLARQGQAKLQQAEQRVQILLSDNEEASPEPFIADNE</sequence>
<keyword id="KW-0963">Cytoplasm</keyword>
<keyword id="KW-0269">Exonuclease</keyword>
<keyword id="KW-0378">Hydrolase</keyword>
<keyword id="KW-0540">Nuclease</keyword>